<accession>B9MDR1</accession>
<gene>
    <name evidence="1" type="primary">rpmF</name>
    <name type="ordered locus">Dtpsy_2635</name>
</gene>
<organism>
    <name type="scientific">Acidovorax ebreus (strain TPSY)</name>
    <name type="common">Diaphorobacter sp. (strain TPSY)</name>
    <dbReference type="NCBI Taxonomy" id="535289"/>
    <lineage>
        <taxon>Bacteria</taxon>
        <taxon>Pseudomonadati</taxon>
        <taxon>Pseudomonadota</taxon>
        <taxon>Betaproteobacteria</taxon>
        <taxon>Burkholderiales</taxon>
        <taxon>Comamonadaceae</taxon>
        <taxon>Diaphorobacter</taxon>
    </lineage>
</organism>
<evidence type="ECO:0000255" key="1">
    <source>
        <dbReference type="HAMAP-Rule" id="MF_00340"/>
    </source>
</evidence>
<evidence type="ECO:0000256" key="2">
    <source>
        <dbReference type="SAM" id="MobiDB-lite"/>
    </source>
</evidence>
<evidence type="ECO:0000305" key="3"/>
<name>RL32_ACIET</name>
<dbReference type="EMBL" id="CP001392">
    <property type="protein sequence ID" value="ACM34070.1"/>
    <property type="molecule type" value="Genomic_DNA"/>
</dbReference>
<dbReference type="RefSeq" id="WP_011806402.1">
    <property type="nucleotide sequence ID" value="NC_011992.1"/>
</dbReference>
<dbReference type="SMR" id="B9MDR1"/>
<dbReference type="GeneID" id="84680609"/>
<dbReference type="KEGG" id="dia:Dtpsy_2635"/>
<dbReference type="eggNOG" id="COG0333">
    <property type="taxonomic scope" value="Bacteria"/>
</dbReference>
<dbReference type="HOGENOM" id="CLU_129084_2_1_4"/>
<dbReference type="Proteomes" id="UP000000450">
    <property type="component" value="Chromosome"/>
</dbReference>
<dbReference type="GO" id="GO:0015934">
    <property type="term" value="C:large ribosomal subunit"/>
    <property type="evidence" value="ECO:0007669"/>
    <property type="project" value="InterPro"/>
</dbReference>
<dbReference type="GO" id="GO:0003735">
    <property type="term" value="F:structural constituent of ribosome"/>
    <property type="evidence" value="ECO:0007669"/>
    <property type="project" value="InterPro"/>
</dbReference>
<dbReference type="GO" id="GO:0006412">
    <property type="term" value="P:translation"/>
    <property type="evidence" value="ECO:0007669"/>
    <property type="project" value="UniProtKB-UniRule"/>
</dbReference>
<dbReference type="HAMAP" id="MF_00340">
    <property type="entry name" value="Ribosomal_bL32"/>
    <property type="match status" value="1"/>
</dbReference>
<dbReference type="InterPro" id="IPR002677">
    <property type="entry name" value="Ribosomal_bL32"/>
</dbReference>
<dbReference type="InterPro" id="IPR044957">
    <property type="entry name" value="Ribosomal_bL32_bact"/>
</dbReference>
<dbReference type="InterPro" id="IPR011332">
    <property type="entry name" value="Ribosomal_zn-bd"/>
</dbReference>
<dbReference type="NCBIfam" id="TIGR01031">
    <property type="entry name" value="rpmF_bact"/>
    <property type="match status" value="1"/>
</dbReference>
<dbReference type="PANTHER" id="PTHR35534">
    <property type="entry name" value="50S RIBOSOMAL PROTEIN L32"/>
    <property type="match status" value="1"/>
</dbReference>
<dbReference type="PANTHER" id="PTHR35534:SF1">
    <property type="entry name" value="LARGE RIBOSOMAL SUBUNIT PROTEIN BL32"/>
    <property type="match status" value="1"/>
</dbReference>
<dbReference type="Pfam" id="PF01783">
    <property type="entry name" value="Ribosomal_L32p"/>
    <property type="match status" value="1"/>
</dbReference>
<dbReference type="SUPFAM" id="SSF57829">
    <property type="entry name" value="Zn-binding ribosomal proteins"/>
    <property type="match status" value="1"/>
</dbReference>
<reference key="1">
    <citation type="submission" date="2009-01" db="EMBL/GenBank/DDBJ databases">
        <title>Complete sequence of Diaphorobacter sp. TPSY.</title>
        <authorList>
            <consortium name="US DOE Joint Genome Institute"/>
            <person name="Lucas S."/>
            <person name="Copeland A."/>
            <person name="Lapidus A."/>
            <person name="Glavina del Rio T."/>
            <person name="Tice H."/>
            <person name="Bruce D."/>
            <person name="Goodwin L."/>
            <person name="Pitluck S."/>
            <person name="Chertkov O."/>
            <person name="Brettin T."/>
            <person name="Detter J.C."/>
            <person name="Han C."/>
            <person name="Larimer F."/>
            <person name="Land M."/>
            <person name="Hauser L."/>
            <person name="Kyrpides N."/>
            <person name="Mikhailova N."/>
            <person name="Coates J.D."/>
        </authorList>
    </citation>
    <scope>NUCLEOTIDE SEQUENCE [LARGE SCALE GENOMIC DNA]</scope>
    <source>
        <strain>TPSY</strain>
    </source>
</reference>
<protein>
    <recommendedName>
        <fullName evidence="1">Large ribosomal subunit protein bL32</fullName>
    </recommendedName>
    <alternativeName>
        <fullName evidence="3">50S ribosomal protein L32</fullName>
    </alternativeName>
</protein>
<sequence length="60" mass="6705">MAVQQNKKSPSKRGMHRSHNALTVPGIAVEPTTGETHMRHHISPNGFYRGRQVLKNKSEA</sequence>
<comment type="similarity">
    <text evidence="1">Belongs to the bacterial ribosomal protein bL32 family.</text>
</comment>
<keyword id="KW-1185">Reference proteome</keyword>
<keyword id="KW-0687">Ribonucleoprotein</keyword>
<keyword id="KW-0689">Ribosomal protein</keyword>
<proteinExistence type="inferred from homology"/>
<feature type="chain" id="PRO_1000195973" description="Large ribosomal subunit protein bL32">
    <location>
        <begin position="1"/>
        <end position="60"/>
    </location>
</feature>
<feature type="region of interest" description="Disordered" evidence="2">
    <location>
        <begin position="1"/>
        <end position="60"/>
    </location>
</feature>
<feature type="compositionally biased region" description="Basic residues" evidence="2">
    <location>
        <begin position="9"/>
        <end position="19"/>
    </location>
</feature>